<proteinExistence type="inferred from homology"/>
<protein>
    <recommendedName>
        <fullName evidence="1">Large ribosomal subunit protein uL16c</fullName>
    </recommendedName>
    <alternativeName>
        <fullName evidence="3">50S ribosomal protein L16, plastid</fullName>
    </alternativeName>
</protein>
<accession>A8W3L9</accession>
<organism>
    <name type="scientific">Cuscuta obtusiflora</name>
    <name type="common">Peruvian dodder</name>
    <dbReference type="NCBI Taxonomy" id="437280"/>
    <lineage>
        <taxon>Eukaryota</taxon>
        <taxon>Viridiplantae</taxon>
        <taxon>Streptophyta</taxon>
        <taxon>Embryophyta</taxon>
        <taxon>Tracheophyta</taxon>
        <taxon>Spermatophyta</taxon>
        <taxon>Magnoliopsida</taxon>
        <taxon>eudicotyledons</taxon>
        <taxon>Gunneridae</taxon>
        <taxon>Pentapetalae</taxon>
        <taxon>asterids</taxon>
        <taxon>lamiids</taxon>
        <taxon>Solanales</taxon>
        <taxon>Convolvulaceae</taxon>
        <taxon>Cuscuteae</taxon>
        <taxon>Cuscuta</taxon>
        <taxon>Cuscuta subgen. Grammica</taxon>
        <taxon>Cuscuta sect. Cleistogrammica</taxon>
    </lineage>
</organism>
<feature type="chain" id="PRO_0000354629" description="Large ribosomal subunit protein uL16c">
    <location>
        <begin position="1"/>
        <end position="137"/>
    </location>
</feature>
<feature type="region of interest" description="Disordered" evidence="2">
    <location>
        <begin position="1"/>
        <end position="21"/>
    </location>
</feature>
<feature type="compositionally biased region" description="Basic residues" evidence="2">
    <location>
        <begin position="1"/>
        <end position="17"/>
    </location>
</feature>
<gene>
    <name evidence="1" type="primary">rpl16</name>
</gene>
<geneLocation type="plastid"/>
<reference key="1">
    <citation type="journal article" date="2007" name="BMC Plant Biol.">
        <title>Complete plastid genome sequences suggest strong selection for retention of photosynthetic genes in the parasitic plant genus Cuscuta.</title>
        <authorList>
            <person name="McNeal J.R."/>
            <person name="Kuehl J.V."/>
            <person name="Boore J.L."/>
            <person name="dePamphilis C.W."/>
        </authorList>
    </citation>
    <scope>NUCLEOTIDE SEQUENCE [LARGE SCALE GENOMIC DNA]</scope>
</reference>
<sequence length="137" mass="15546">MLSPKKTRFRRQHRGRMKGLSSRGNQICFGKYGLQALEPAWITSRQIEAGRRAMTRNARRGGKIWVRIFPDKPVTIRPAETRMGSGKGSPEFWVSVVKPGRILYEMDGVTKNVAKRAIGIAASKMPIRTQFIFSEIK</sequence>
<comment type="subunit">
    <text evidence="1">Part of the 50S ribosomal subunit.</text>
</comment>
<comment type="subcellular location">
    <subcellularLocation>
        <location>Plastid</location>
    </subcellularLocation>
</comment>
<comment type="similarity">
    <text evidence="1">Belongs to the universal ribosomal protein uL16 family.</text>
</comment>
<comment type="caution">
    <text evidence="3">Only inflorescences, fruits, starved seedlings and stressed stem tips are green in this organism.</text>
</comment>
<dbReference type="EMBL" id="EU189133">
    <property type="protein sequence ID" value="ABW20594.1"/>
    <property type="molecule type" value="Genomic_DNA"/>
</dbReference>
<dbReference type="RefSeq" id="YP_001531249.1">
    <property type="nucleotide sequence ID" value="NC_009949.1"/>
</dbReference>
<dbReference type="SMR" id="A8W3L9"/>
<dbReference type="GeneID" id="5714797"/>
<dbReference type="GO" id="GO:0005762">
    <property type="term" value="C:mitochondrial large ribosomal subunit"/>
    <property type="evidence" value="ECO:0007669"/>
    <property type="project" value="TreeGrafter"/>
</dbReference>
<dbReference type="GO" id="GO:0009536">
    <property type="term" value="C:plastid"/>
    <property type="evidence" value="ECO:0007669"/>
    <property type="project" value="UniProtKB-SubCell"/>
</dbReference>
<dbReference type="GO" id="GO:0019843">
    <property type="term" value="F:rRNA binding"/>
    <property type="evidence" value="ECO:0007669"/>
    <property type="project" value="InterPro"/>
</dbReference>
<dbReference type="GO" id="GO:0003735">
    <property type="term" value="F:structural constituent of ribosome"/>
    <property type="evidence" value="ECO:0007669"/>
    <property type="project" value="InterPro"/>
</dbReference>
<dbReference type="GO" id="GO:0032543">
    <property type="term" value="P:mitochondrial translation"/>
    <property type="evidence" value="ECO:0007669"/>
    <property type="project" value="TreeGrafter"/>
</dbReference>
<dbReference type="CDD" id="cd01433">
    <property type="entry name" value="Ribosomal_L16_L10e"/>
    <property type="match status" value="1"/>
</dbReference>
<dbReference type="FunFam" id="3.90.1170.10:FF:000001">
    <property type="entry name" value="50S ribosomal protein L16"/>
    <property type="match status" value="1"/>
</dbReference>
<dbReference type="Gene3D" id="3.90.1170.10">
    <property type="entry name" value="Ribosomal protein L10e/L16"/>
    <property type="match status" value="1"/>
</dbReference>
<dbReference type="HAMAP" id="MF_01342">
    <property type="entry name" value="Ribosomal_uL16"/>
    <property type="match status" value="1"/>
</dbReference>
<dbReference type="InterPro" id="IPR047873">
    <property type="entry name" value="Ribosomal_uL16"/>
</dbReference>
<dbReference type="InterPro" id="IPR000114">
    <property type="entry name" value="Ribosomal_uL16_bact-type"/>
</dbReference>
<dbReference type="InterPro" id="IPR020798">
    <property type="entry name" value="Ribosomal_uL16_CS"/>
</dbReference>
<dbReference type="InterPro" id="IPR016180">
    <property type="entry name" value="Ribosomal_uL16_dom"/>
</dbReference>
<dbReference type="InterPro" id="IPR036920">
    <property type="entry name" value="Ribosomal_uL16_sf"/>
</dbReference>
<dbReference type="NCBIfam" id="TIGR01164">
    <property type="entry name" value="rplP_bact"/>
    <property type="match status" value="1"/>
</dbReference>
<dbReference type="PANTHER" id="PTHR12220">
    <property type="entry name" value="50S/60S RIBOSOMAL PROTEIN L16"/>
    <property type="match status" value="1"/>
</dbReference>
<dbReference type="PANTHER" id="PTHR12220:SF13">
    <property type="entry name" value="LARGE RIBOSOMAL SUBUNIT PROTEIN UL16M"/>
    <property type="match status" value="1"/>
</dbReference>
<dbReference type="Pfam" id="PF00252">
    <property type="entry name" value="Ribosomal_L16"/>
    <property type="match status" value="1"/>
</dbReference>
<dbReference type="PRINTS" id="PR00060">
    <property type="entry name" value="RIBOSOMALL16"/>
</dbReference>
<dbReference type="SUPFAM" id="SSF54686">
    <property type="entry name" value="Ribosomal protein L16p/L10e"/>
    <property type="match status" value="1"/>
</dbReference>
<dbReference type="PROSITE" id="PS00586">
    <property type="entry name" value="RIBOSOMAL_L16_1"/>
    <property type="match status" value="1"/>
</dbReference>
<dbReference type="PROSITE" id="PS00701">
    <property type="entry name" value="RIBOSOMAL_L16_2"/>
    <property type="match status" value="1"/>
</dbReference>
<keyword id="KW-0934">Plastid</keyword>
<keyword id="KW-0687">Ribonucleoprotein</keyword>
<keyword id="KW-0689">Ribosomal protein</keyword>
<name>RK16_CUSOB</name>
<evidence type="ECO:0000255" key="1">
    <source>
        <dbReference type="HAMAP-Rule" id="MF_01342"/>
    </source>
</evidence>
<evidence type="ECO:0000256" key="2">
    <source>
        <dbReference type="SAM" id="MobiDB-lite"/>
    </source>
</evidence>
<evidence type="ECO:0000305" key="3"/>